<gene>
    <name type="primary">slx1</name>
    <name type="ORF">GM10768</name>
</gene>
<protein>
    <recommendedName>
        <fullName evidence="1">Structure-specific endonuclease subunit SLX1 homolog</fullName>
        <ecNumber evidence="1">3.1.-.-</ecNumber>
    </recommendedName>
</protein>
<organism>
    <name type="scientific">Drosophila sechellia</name>
    <name type="common">Fruit fly</name>
    <dbReference type="NCBI Taxonomy" id="7238"/>
    <lineage>
        <taxon>Eukaryota</taxon>
        <taxon>Metazoa</taxon>
        <taxon>Ecdysozoa</taxon>
        <taxon>Arthropoda</taxon>
        <taxon>Hexapoda</taxon>
        <taxon>Insecta</taxon>
        <taxon>Pterygota</taxon>
        <taxon>Neoptera</taxon>
        <taxon>Endopterygota</taxon>
        <taxon>Diptera</taxon>
        <taxon>Brachycera</taxon>
        <taxon>Muscomorpha</taxon>
        <taxon>Ephydroidea</taxon>
        <taxon>Drosophilidae</taxon>
        <taxon>Drosophila</taxon>
        <taxon>Sophophora</taxon>
    </lineage>
</organism>
<reference key="1">
    <citation type="journal article" date="2007" name="Nature">
        <title>Evolution of genes and genomes on the Drosophila phylogeny.</title>
        <authorList>
            <consortium name="Drosophila 12 genomes consortium"/>
        </authorList>
    </citation>
    <scope>NUCLEOTIDE SEQUENCE [LARGE SCALE GENOMIC DNA]</scope>
    <source>
        <strain>Rob3c / Tucson 14021-0248.25</strain>
    </source>
</reference>
<name>SLX1_DROSE</name>
<evidence type="ECO:0000255" key="1">
    <source>
        <dbReference type="HAMAP-Rule" id="MF_03100"/>
    </source>
</evidence>
<evidence type="ECO:0000256" key="2">
    <source>
        <dbReference type="SAM" id="MobiDB-lite"/>
    </source>
</evidence>
<evidence type="ECO:0000305" key="3"/>
<comment type="function">
    <text evidence="1">Catalytic subunit of a heterodimeric structure-specific endonuclease that resolves DNA secondary structures generated during DNA repair and recombination. Has endonuclease activity towards branched DNA substrates, introducing single-strand cuts in duplex DNA close to junctions with ss-DNA.</text>
</comment>
<comment type="cofactor">
    <cofactor evidence="1">
        <name>a divalent metal cation</name>
        <dbReference type="ChEBI" id="CHEBI:60240"/>
    </cofactor>
</comment>
<comment type="subunit">
    <text evidence="1">Forms a heterodimer with mus312/SLX4.</text>
</comment>
<comment type="subcellular location">
    <subcellularLocation>
        <location evidence="1">Nucleus</location>
    </subcellularLocation>
</comment>
<comment type="similarity">
    <text evidence="1">Belongs to the SLX1 family.</text>
</comment>
<comment type="sequence caution" evidence="3">
    <conflict type="erroneous gene model prediction">
        <sequence resource="EMBL-CDS" id="EDW54855"/>
    </conflict>
</comment>
<proteinExistence type="inferred from homology"/>
<feature type="chain" id="PRO_0000383760" description="Structure-specific endonuclease subunit SLX1 homolog">
    <location>
        <begin position="1"/>
        <end position="298"/>
    </location>
</feature>
<feature type="domain" description="GIY-YIG" evidence="1">
    <location>
        <begin position="22"/>
        <end position="108"/>
    </location>
</feature>
<feature type="zinc finger region" description="SLX1-type" evidence="1">
    <location>
        <begin position="196"/>
        <end position="249"/>
    </location>
</feature>
<feature type="region of interest" description="Disordered" evidence="2">
    <location>
        <begin position="275"/>
        <end position="298"/>
    </location>
</feature>
<keyword id="KW-0227">DNA damage</keyword>
<keyword id="KW-0233">DNA recombination</keyword>
<keyword id="KW-0234">DNA repair</keyword>
<keyword id="KW-0255">Endonuclease</keyword>
<keyword id="KW-0378">Hydrolase</keyword>
<keyword id="KW-0479">Metal-binding</keyword>
<keyword id="KW-0540">Nuclease</keyword>
<keyword id="KW-0539">Nucleus</keyword>
<keyword id="KW-1185">Reference proteome</keyword>
<keyword id="KW-0862">Zinc</keyword>
<keyword id="KW-0863">Zinc-finger</keyword>
<sequence length="298" mass="34191">MNSYDPQDTGSQQEETVALKGHFYGVYLLCSQSLDPRYRGKCYVGFTVNPKRRIRQHNLGCDFGGARKTSRKGPWLMVMIVHGFPNNTVALQFEWAWQQPSLSTRLKMYPELKRKLPRETFFDYNFRILSHMLGVGPWNRLPLTVRWLETDYERPFSKTLPNHMEIVSGKVSISASQRRRPDDAVPPPPVAWASECHLCMQQIEQPEKSRLGCTNQMCRLTCHMVCLANYLLGDETGHYIPVGGECPLCETRLSWAALLQRKRLLMGVPEELQDHDEDLSDDIDVDSDIEDGAQELSN</sequence>
<accession>B4I3R2</accession>
<dbReference type="EC" id="3.1.-.-" evidence="1"/>
<dbReference type="EMBL" id="CH480821">
    <property type="protein sequence ID" value="EDW54855.1"/>
    <property type="status" value="ALT_SEQ"/>
    <property type="molecule type" value="Genomic_DNA"/>
</dbReference>
<dbReference type="RefSeq" id="XP_002038318.1">
    <property type="nucleotide sequence ID" value="XM_002038282.1"/>
</dbReference>
<dbReference type="SMR" id="B4I3R2"/>
<dbReference type="STRING" id="7238.B4I3R2"/>
<dbReference type="EnsemblMetazoa" id="FBtr0193753">
    <property type="protein sequence ID" value="FBpp0192245"/>
    <property type="gene ID" value="FBgn0165714"/>
</dbReference>
<dbReference type="EnsemblMetazoa" id="XM_002038282.2">
    <property type="protein sequence ID" value="XP_002038318.2"/>
    <property type="gene ID" value="LOC6613849"/>
</dbReference>
<dbReference type="GeneID" id="6613849"/>
<dbReference type="KEGG" id="dse:6613849"/>
<dbReference type="Proteomes" id="UP000001292">
    <property type="component" value="Unassembled WGS sequence"/>
</dbReference>
<dbReference type="GO" id="GO:0033557">
    <property type="term" value="C:Slx1-Slx4 complex"/>
    <property type="evidence" value="ECO:0007669"/>
    <property type="project" value="UniProtKB-UniRule"/>
</dbReference>
<dbReference type="GO" id="GO:0017108">
    <property type="term" value="F:5'-flap endonuclease activity"/>
    <property type="evidence" value="ECO:0007669"/>
    <property type="project" value="InterPro"/>
</dbReference>
<dbReference type="GO" id="GO:0008821">
    <property type="term" value="F:crossover junction DNA endonuclease activity"/>
    <property type="evidence" value="ECO:0007669"/>
    <property type="project" value="TreeGrafter"/>
</dbReference>
<dbReference type="GO" id="GO:0008270">
    <property type="term" value="F:zinc ion binding"/>
    <property type="evidence" value="ECO:0007669"/>
    <property type="project" value="UniProtKB-KW"/>
</dbReference>
<dbReference type="GO" id="GO:0000724">
    <property type="term" value="P:double-strand break repair via homologous recombination"/>
    <property type="evidence" value="ECO:0007669"/>
    <property type="project" value="TreeGrafter"/>
</dbReference>
<dbReference type="CDD" id="cd10455">
    <property type="entry name" value="GIY-YIG_SLX1"/>
    <property type="match status" value="1"/>
</dbReference>
<dbReference type="FunFam" id="3.40.1440.10:FF:000012">
    <property type="entry name" value="Structure-specific endonuclease subunit SLX1 homolog"/>
    <property type="match status" value="1"/>
</dbReference>
<dbReference type="Gene3D" id="3.40.1440.10">
    <property type="entry name" value="GIY-YIG endonuclease"/>
    <property type="match status" value="1"/>
</dbReference>
<dbReference type="Gene3D" id="3.30.40.10">
    <property type="entry name" value="Zinc/RING finger domain, C3HC4 (zinc finger)"/>
    <property type="match status" value="1"/>
</dbReference>
<dbReference type="HAMAP" id="MF_03100">
    <property type="entry name" value="Endonuc_su_Slx1"/>
    <property type="match status" value="1"/>
</dbReference>
<dbReference type="InterPro" id="IPR000305">
    <property type="entry name" value="GIY-YIG_endonuc"/>
</dbReference>
<dbReference type="InterPro" id="IPR035901">
    <property type="entry name" value="GIY-YIG_endonuc_sf"/>
</dbReference>
<dbReference type="InterPro" id="IPR027520">
    <property type="entry name" value="Slx1"/>
</dbReference>
<dbReference type="InterPro" id="IPR048749">
    <property type="entry name" value="SLX1_C"/>
</dbReference>
<dbReference type="InterPro" id="IPR050381">
    <property type="entry name" value="SLX1_endonuclease"/>
</dbReference>
<dbReference type="InterPro" id="IPR013083">
    <property type="entry name" value="Znf_RING/FYVE/PHD"/>
</dbReference>
<dbReference type="PANTHER" id="PTHR20208">
    <property type="entry name" value="STRUCTURE-SPECIFIC ENDONUCLEASE SUBUNIT SLX1"/>
    <property type="match status" value="1"/>
</dbReference>
<dbReference type="PANTHER" id="PTHR20208:SF10">
    <property type="entry name" value="STRUCTURE-SPECIFIC ENDONUCLEASE SUBUNIT SLX1"/>
    <property type="match status" value="1"/>
</dbReference>
<dbReference type="Pfam" id="PF01541">
    <property type="entry name" value="GIY-YIG"/>
    <property type="match status" value="1"/>
</dbReference>
<dbReference type="Pfam" id="PF21202">
    <property type="entry name" value="SLX1_C"/>
    <property type="match status" value="1"/>
</dbReference>
<dbReference type="SMART" id="SM00465">
    <property type="entry name" value="GIYc"/>
    <property type="match status" value="1"/>
</dbReference>
<dbReference type="SUPFAM" id="SSF82771">
    <property type="entry name" value="GIY-YIG endonuclease"/>
    <property type="match status" value="1"/>
</dbReference>
<dbReference type="PROSITE" id="PS50164">
    <property type="entry name" value="GIY_YIG"/>
    <property type="match status" value="1"/>
</dbReference>